<name>LEUD1_THEMA</name>
<feature type="chain" id="PRO_0000141927" description="3-isopropylmalate dehydratase small subunit 1">
    <location>
        <begin position="1"/>
        <end position="166"/>
    </location>
</feature>
<reference key="1">
    <citation type="journal article" date="1999" name="Nature">
        <title>Evidence for lateral gene transfer between Archaea and Bacteria from genome sequence of Thermotoga maritima.</title>
        <authorList>
            <person name="Nelson K.E."/>
            <person name="Clayton R.A."/>
            <person name="Gill S.R."/>
            <person name="Gwinn M.L."/>
            <person name="Dodson R.J."/>
            <person name="Haft D.H."/>
            <person name="Hickey E.K."/>
            <person name="Peterson J.D."/>
            <person name="Nelson W.C."/>
            <person name="Ketchum K.A."/>
            <person name="McDonald L.A."/>
            <person name="Utterback T.R."/>
            <person name="Malek J.A."/>
            <person name="Linher K.D."/>
            <person name="Garrett M.M."/>
            <person name="Stewart A.M."/>
            <person name="Cotton M.D."/>
            <person name="Pratt M.S."/>
            <person name="Phillips C.A."/>
            <person name="Richardson D.L."/>
            <person name="Heidelberg J.F."/>
            <person name="Sutton G.G."/>
            <person name="Fleischmann R.D."/>
            <person name="Eisen J.A."/>
            <person name="White O."/>
            <person name="Salzberg S.L."/>
            <person name="Smith H.O."/>
            <person name="Venter J.C."/>
            <person name="Fraser C.M."/>
        </authorList>
    </citation>
    <scope>NUCLEOTIDE SEQUENCE [LARGE SCALE GENOMIC DNA]</scope>
    <source>
        <strain>ATCC 43589 / DSM 3109 / JCM 10099 / NBRC 100826 / MSB8</strain>
    </source>
</reference>
<accession>Q9WYC8</accession>
<proteinExistence type="inferred from homology"/>
<gene>
    <name type="primary">leuD1</name>
    <name type="ordered locus">TM_0292</name>
</gene>
<comment type="function">
    <text evidence="1">Catalyzes the isomerization between 2-isopropylmalate and 3-isopropylmalate, via the formation of 2-isopropylmaleate.</text>
</comment>
<comment type="catalytic activity">
    <reaction>
        <text>(2R,3S)-3-isopropylmalate = (2S)-2-isopropylmalate</text>
        <dbReference type="Rhea" id="RHEA:32287"/>
        <dbReference type="ChEBI" id="CHEBI:1178"/>
        <dbReference type="ChEBI" id="CHEBI:35121"/>
        <dbReference type="EC" id="4.2.1.33"/>
    </reaction>
</comment>
<comment type="pathway">
    <text>Amino-acid biosynthesis; L-leucine biosynthesis; L-leucine from 3-methyl-2-oxobutanoate: step 2/4.</text>
</comment>
<comment type="subunit">
    <text evidence="1">Heterodimer of LeuC and LeuD.</text>
</comment>
<comment type="similarity">
    <text evidence="2">Belongs to the LeuD family. LeuD type 2 subfamily.</text>
</comment>
<protein>
    <recommendedName>
        <fullName>3-isopropylmalate dehydratase small subunit 1</fullName>
        <ecNumber>4.2.1.33</ecNumber>
    </recommendedName>
    <alternativeName>
        <fullName>Alpha-IPM isomerase 1</fullName>
        <shortName>IPMI 1</shortName>
    </alternativeName>
    <alternativeName>
        <fullName>Isopropylmalate isomerase 1</fullName>
    </alternativeName>
</protein>
<keyword id="KW-0028">Amino-acid biosynthesis</keyword>
<keyword id="KW-0100">Branched-chain amino acid biosynthesis</keyword>
<keyword id="KW-0432">Leucine biosynthesis</keyword>
<keyword id="KW-0456">Lyase</keyword>
<keyword id="KW-1185">Reference proteome</keyword>
<organism>
    <name type="scientific">Thermotoga maritima (strain ATCC 43589 / DSM 3109 / JCM 10099 / NBRC 100826 / MSB8)</name>
    <dbReference type="NCBI Taxonomy" id="243274"/>
    <lineage>
        <taxon>Bacteria</taxon>
        <taxon>Thermotogati</taxon>
        <taxon>Thermotogota</taxon>
        <taxon>Thermotogae</taxon>
        <taxon>Thermotogales</taxon>
        <taxon>Thermotogaceae</taxon>
        <taxon>Thermotoga</taxon>
    </lineage>
</organism>
<sequence>MIRGRVWKFGDNISTDHIAPGRYFHLRNNLEELAKHVLEDAMEDFAKKVQKGDIIVAGKNFGLGSSREHAARIIKIAGVSCIVAKSFARIFYRNAINVGLPVIELKEVDEINQGDELEIDLENGVLKNLTTGKEYRFTPIPKFLLEILKEDGIVNYLKKHGSFPKV</sequence>
<evidence type="ECO:0000250" key="1"/>
<evidence type="ECO:0000305" key="2"/>
<dbReference type="EC" id="4.2.1.33"/>
<dbReference type="EMBL" id="AE000512">
    <property type="protein sequence ID" value="AAD35380.1"/>
    <property type="molecule type" value="Genomic_DNA"/>
</dbReference>
<dbReference type="PIR" id="D72394">
    <property type="entry name" value="D72394"/>
</dbReference>
<dbReference type="RefSeq" id="NP_228104.1">
    <property type="nucleotide sequence ID" value="NC_000853.1"/>
</dbReference>
<dbReference type="RefSeq" id="WP_004083008.1">
    <property type="nucleotide sequence ID" value="NZ_CP011107.1"/>
</dbReference>
<dbReference type="SMR" id="Q9WYC8"/>
<dbReference type="FunCoup" id="Q9WYC8">
    <property type="interactions" value="338"/>
</dbReference>
<dbReference type="STRING" id="243274.TM_0292"/>
<dbReference type="PaxDb" id="243274-THEMA_03265"/>
<dbReference type="EnsemblBacteria" id="AAD35380">
    <property type="protein sequence ID" value="AAD35380"/>
    <property type="gene ID" value="TM_0292"/>
</dbReference>
<dbReference type="KEGG" id="tma:TM0292"/>
<dbReference type="KEGG" id="tmm:Tmari_0290"/>
<dbReference type="KEGG" id="tmw:THMA_0299"/>
<dbReference type="eggNOG" id="COG0066">
    <property type="taxonomic scope" value="Bacteria"/>
</dbReference>
<dbReference type="InParanoid" id="Q9WYC8"/>
<dbReference type="OrthoDB" id="9777465at2"/>
<dbReference type="UniPathway" id="UPA00048">
    <property type="reaction ID" value="UER00071"/>
</dbReference>
<dbReference type="Proteomes" id="UP000008183">
    <property type="component" value="Chromosome"/>
</dbReference>
<dbReference type="GO" id="GO:0003861">
    <property type="term" value="F:3-isopropylmalate dehydratase activity"/>
    <property type="evidence" value="ECO:0007669"/>
    <property type="project" value="UniProtKB-UniRule"/>
</dbReference>
<dbReference type="GO" id="GO:0009098">
    <property type="term" value="P:L-leucine biosynthetic process"/>
    <property type="evidence" value="ECO:0007669"/>
    <property type="project" value="UniProtKB-UniRule"/>
</dbReference>
<dbReference type="CDD" id="cd01577">
    <property type="entry name" value="IPMI_Swivel"/>
    <property type="match status" value="1"/>
</dbReference>
<dbReference type="Gene3D" id="3.20.19.10">
    <property type="entry name" value="Aconitase, domain 4"/>
    <property type="match status" value="1"/>
</dbReference>
<dbReference type="HAMAP" id="MF_01032">
    <property type="entry name" value="LeuD_type2"/>
    <property type="match status" value="1"/>
</dbReference>
<dbReference type="InterPro" id="IPR015928">
    <property type="entry name" value="Aconitase/3IPM_dehydase_swvl"/>
</dbReference>
<dbReference type="InterPro" id="IPR000573">
    <property type="entry name" value="AconitaseA/IPMdHydase_ssu_swvl"/>
</dbReference>
<dbReference type="InterPro" id="IPR033940">
    <property type="entry name" value="IPMI_Swivel"/>
</dbReference>
<dbReference type="InterPro" id="IPR050075">
    <property type="entry name" value="LeuD"/>
</dbReference>
<dbReference type="InterPro" id="IPR011827">
    <property type="entry name" value="LeuD_type2/HacB/DmdB"/>
</dbReference>
<dbReference type="NCBIfam" id="TIGR02087">
    <property type="entry name" value="LEUD_arch"/>
    <property type="match status" value="1"/>
</dbReference>
<dbReference type="PANTHER" id="PTHR43345:SF2">
    <property type="entry name" value="3-ISOPROPYLMALATE DEHYDRATASE SMALL SUBUNIT 1"/>
    <property type="match status" value="1"/>
</dbReference>
<dbReference type="PANTHER" id="PTHR43345">
    <property type="entry name" value="3-ISOPROPYLMALATE DEHYDRATASE SMALL SUBUNIT 2-RELATED-RELATED"/>
    <property type="match status" value="1"/>
</dbReference>
<dbReference type="Pfam" id="PF00694">
    <property type="entry name" value="Aconitase_C"/>
    <property type="match status" value="1"/>
</dbReference>
<dbReference type="SUPFAM" id="SSF52016">
    <property type="entry name" value="LeuD/IlvD-like"/>
    <property type="match status" value="1"/>
</dbReference>